<proteinExistence type="predicted"/>
<gene>
    <name type="ORF">DDB_G0289381</name>
</gene>
<dbReference type="EMBL" id="AAFI02000139">
    <property type="protein sequence ID" value="EAL62777.1"/>
    <property type="molecule type" value="Genomic_DNA"/>
</dbReference>
<dbReference type="RefSeq" id="XP_636283.1">
    <property type="nucleotide sequence ID" value="XM_631191.1"/>
</dbReference>
<dbReference type="SMR" id="Q54HL8"/>
<dbReference type="PaxDb" id="44689-DDB0237880"/>
<dbReference type="EnsemblProtists" id="EAL62777">
    <property type="protein sequence ID" value="EAL62777"/>
    <property type="gene ID" value="DDB_G0289381"/>
</dbReference>
<dbReference type="GeneID" id="8627101"/>
<dbReference type="KEGG" id="ddi:DDB_G0289381"/>
<dbReference type="dictyBase" id="DDB_G0289381"/>
<dbReference type="VEuPathDB" id="AmoebaDB:DDB_G0289381"/>
<dbReference type="eggNOG" id="ENOG502RDFJ">
    <property type="taxonomic scope" value="Eukaryota"/>
</dbReference>
<dbReference type="HOGENOM" id="CLU_365807_0_0_1"/>
<dbReference type="InParanoid" id="Q54HL8"/>
<dbReference type="OMA" id="QPESICK"/>
<dbReference type="PhylomeDB" id="Q54HL8"/>
<dbReference type="PRO" id="PR:Q54HL8"/>
<dbReference type="Proteomes" id="UP000002195">
    <property type="component" value="Chromosome 5"/>
</dbReference>
<dbReference type="InterPro" id="IPR008615">
    <property type="entry name" value="FNIP"/>
</dbReference>
<dbReference type="InterPro" id="IPR051251">
    <property type="entry name" value="STK_FNIP-Repeat"/>
</dbReference>
<dbReference type="PANTHER" id="PTHR32134">
    <property type="entry name" value="FNIP REPEAT-CONTAINING PROTEIN"/>
    <property type="match status" value="1"/>
</dbReference>
<dbReference type="PANTHER" id="PTHR32134:SF173">
    <property type="entry name" value="FNIP REPEAT-CONTAINING PROTEIN-RELATED"/>
    <property type="match status" value="1"/>
</dbReference>
<dbReference type="Pfam" id="PF05725">
    <property type="entry name" value="FNIP"/>
    <property type="match status" value="8"/>
</dbReference>
<keyword id="KW-0175">Coiled coil</keyword>
<keyword id="KW-1185">Reference proteome</keyword>
<keyword id="KW-0677">Repeat</keyword>
<protein>
    <recommendedName>
        <fullName>FNIP repeat-containing protein DDB_G0289381</fullName>
    </recommendedName>
</protein>
<accession>Q54HL8</accession>
<name>Y9381_DICDI</name>
<evidence type="ECO:0000255" key="1"/>
<evidence type="ECO:0000256" key="2">
    <source>
        <dbReference type="SAM" id="MobiDB-lite"/>
    </source>
</evidence>
<feature type="chain" id="PRO_0000363981" description="FNIP repeat-containing protein DDB_G0289381">
    <location>
        <begin position="1"/>
        <end position="846"/>
    </location>
</feature>
<feature type="repeat" description="FNIP 1">
    <location>
        <begin position="159"/>
        <end position="193"/>
    </location>
</feature>
<feature type="repeat" description="FNIP 2">
    <location>
        <begin position="194"/>
        <end position="239"/>
    </location>
</feature>
<feature type="repeat" description="FNIP 3">
    <location>
        <begin position="240"/>
        <end position="283"/>
    </location>
</feature>
<feature type="repeat" description="FNIP 4">
    <location>
        <begin position="284"/>
        <end position="325"/>
    </location>
</feature>
<feature type="repeat" description="FNIP 5">
    <location>
        <begin position="458"/>
        <end position="500"/>
    </location>
</feature>
<feature type="repeat" description="FNIP 6">
    <location>
        <begin position="501"/>
        <end position="546"/>
    </location>
</feature>
<feature type="repeat" description="FNIP 7">
    <location>
        <begin position="654"/>
        <end position="693"/>
    </location>
</feature>
<feature type="region of interest" description="Disordered" evidence="2">
    <location>
        <begin position="1"/>
        <end position="39"/>
    </location>
</feature>
<feature type="region of interest" description="Disordered" evidence="2">
    <location>
        <begin position="362"/>
        <end position="384"/>
    </location>
</feature>
<feature type="region of interest" description="Disordered" evidence="2">
    <location>
        <begin position="702"/>
        <end position="734"/>
    </location>
</feature>
<feature type="coiled-coil region" evidence="1">
    <location>
        <begin position="702"/>
        <end position="734"/>
    </location>
</feature>
<feature type="compositionally biased region" description="Basic residues" evidence="2">
    <location>
        <begin position="1"/>
        <end position="11"/>
    </location>
</feature>
<feature type="compositionally biased region" description="Basic and acidic residues" evidence="2">
    <location>
        <begin position="20"/>
        <end position="33"/>
    </location>
</feature>
<sequence>MKLLSFKKKPSLTKSQSCPDKLKNLKEQQKDPKNGANYDTATIKSYTLQQHQQQQQQQREDNNMINNENEDFSFNYFDYDEDQESTYSREERLFFSIWRNNKIKRCIFHHLEIFNLMNNINDPITLDQLNLIDSGKLRDYCKIVKIEKNEKIELQCMPIPNHIEKLIFSNEFDKPIKAGTIPQSVVEIEFGEKFNQVLKQGQLPPSLEILKFGKRFNQMVTHSTGELPTSLTTLIFGNNFDQIILKNFIPPNVSTLIFGLNFDQPLSPGYIPSSVTKLEFQENFNQPLTIGTIPKNVKHLKIFSKFPLNQGAIPQSCTTLYYGGDCNQGTKNIPDSVKSLHFLQSIDCNNLTKERSLSKSSSSISLDISGGGSGSGSGVNSTTTSEKITFLQPESICKSVTNLTIELNQGPPNKKYLPMNSVTQLSLGINEFKKPLKSSYIPNCCTSLLLNIGPDYKFQQLLSKSIPSSVTALQFGPNFNLTIMPNSLPIHLRSIDFGDGFNQQLLQNSLPTLIDSIKFGNSYNQPISNNVLSNSNYLTSIEFGKSFDQPLIIGNGIGNLNNNNINNNVTNSNLPITLNKLKFSKDSNFKSLLKIESDSMIEEIEFGDQYNEEFNNQCSLGCTHLLSIKFGENFNQPINNLPISIKKLIFGNSFNQSIKNLPENLTSLSLGTSFSQNLINLPNSLIELKMFNKDFLNNLNFSNNNNENNNENNNENNNENNNENNNENNNNTNSFNDFIKNTTIKRIKVPCLITTLNFIVEKNKSKNCSLLKFYCFVVANNNYTNLVKYNLLLNKSYFEKWSKKKEGQSPRKQRKKKIPTDQRSTKLLLVRKFLYQVFFFFFFFFF</sequence>
<organism>
    <name type="scientific">Dictyostelium discoideum</name>
    <name type="common">Social amoeba</name>
    <dbReference type="NCBI Taxonomy" id="44689"/>
    <lineage>
        <taxon>Eukaryota</taxon>
        <taxon>Amoebozoa</taxon>
        <taxon>Evosea</taxon>
        <taxon>Eumycetozoa</taxon>
        <taxon>Dictyostelia</taxon>
        <taxon>Dictyosteliales</taxon>
        <taxon>Dictyosteliaceae</taxon>
        <taxon>Dictyostelium</taxon>
    </lineage>
</organism>
<reference key="1">
    <citation type="journal article" date="2005" name="Nature">
        <title>The genome of the social amoeba Dictyostelium discoideum.</title>
        <authorList>
            <person name="Eichinger L."/>
            <person name="Pachebat J.A."/>
            <person name="Gloeckner G."/>
            <person name="Rajandream M.A."/>
            <person name="Sucgang R."/>
            <person name="Berriman M."/>
            <person name="Song J."/>
            <person name="Olsen R."/>
            <person name="Szafranski K."/>
            <person name="Xu Q."/>
            <person name="Tunggal B."/>
            <person name="Kummerfeld S."/>
            <person name="Madera M."/>
            <person name="Konfortov B.A."/>
            <person name="Rivero F."/>
            <person name="Bankier A.T."/>
            <person name="Lehmann R."/>
            <person name="Hamlin N."/>
            <person name="Davies R."/>
            <person name="Gaudet P."/>
            <person name="Fey P."/>
            <person name="Pilcher K."/>
            <person name="Chen G."/>
            <person name="Saunders D."/>
            <person name="Sodergren E.J."/>
            <person name="Davis P."/>
            <person name="Kerhornou A."/>
            <person name="Nie X."/>
            <person name="Hall N."/>
            <person name="Anjard C."/>
            <person name="Hemphill L."/>
            <person name="Bason N."/>
            <person name="Farbrother P."/>
            <person name="Desany B."/>
            <person name="Just E."/>
            <person name="Morio T."/>
            <person name="Rost R."/>
            <person name="Churcher C.M."/>
            <person name="Cooper J."/>
            <person name="Haydock S."/>
            <person name="van Driessche N."/>
            <person name="Cronin A."/>
            <person name="Goodhead I."/>
            <person name="Muzny D.M."/>
            <person name="Mourier T."/>
            <person name="Pain A."/>
            <person name="Lu M."/>
            <person name="Harper D."/>
            <person name="Lindsay R."/>
            <person name="Hauser H."/>
            <person name="James K.D."/>
            <person name="Quiles M."/>
            <person name="Madan Babu M."/>
            <person name="Saito T."/>
            <person name="Buchrieser C."/>
            <person name="Wardroper A."/>
            <person name="Felder M."/>
            <person name="Thangavelu M."/>
            <person name="Johnson D."/>
            <person name="Knights A."/>
            <person name="Loulseged H."/>
            <person name="Mungall K.L."/>
            <person name="Oliver K."/>
            <person name="Price C."/>
            <person name="Quail M.A."/>
            <person name="Urushihara H."/>
            <person name="Hernandez J."/>
            <person name="Rabbinowitsch E."/>
            <person name="Steffen D."/>
            <person name="Sanders M."/>
            <person name="Ma J."/>
            <person name="Kohara Y."/>
            <person name="Sharp S."/>
            <person name="Simmonds M.N."/>
            <person name="Spiegler S."/>
            <person name="Tivey A."/>
            <person name="Sugano S."/>
            <person name="White B."/>
            <person name="Walker D."/>
            <person name="Woodward J.R."/>
            <person name="Winckler T."/>
            <person name="Tanaka Y."/>
            <person name="Shaulsky G."/>
            <person name="Schleicher M."/>
            <person name="Weinstock G.M."/>
            <person name="Rosenthal A."/>
            <person name="Cox E.C."/>
            <person name="Chisholm R.L."/>
            <person name="Gibbs R.A."/>
            <person name="Loomis W.F."/>
            <person name="Platzer M."/>
            <person name="Kay R.R."/>
            <person name="Williams J.G."/>
            <person name="Dear P.H."/>
            <person name="Noegel A.A."/>
            <person name="Barrell B.G."/>
            <person name="Kuspa A."/>
        </authorList>
    </citation>
    <scope>NUCLEOTIDE SEQUENCE [LARGE SCALE GENOMIC DNA]</scope>
    <source>
        <strain>AX4</strain>
    </source>
</reference>